<protein>
    <recommendedName>
        <fullName evidence="1">UvrABC system protein C</fullName>
        <shortName evidence="1">Protein UvrC</shortName>
    </recommendedName>
    <alternativeName>
        <fullName evidence="1">Excinuclease ABC subunit C</fullName>
    </alternativeName>
</protein>
<feature type="chain" id="PRO_1000077768" description="UvrABC system protein C">
    <location>
        <begin position="1"/>
        <end position="631"/>
    </location>
</feature>
<feature type="domain" description="GIY-YIG" evidence="1">
    <location>
        <begin position="26"/>
        <end position="105"/>
    </location>
</feature>
<feature type="domain" description="UVR" evidence="1">
    <location>
        <begin position="219"/>
        <end position="254"/>
    </location>
</feature>
<reference key="1">
    <citation type="submission" date="2006-12" db="EMBL/GenBank/DDBJ databases">
        <title>Complete sequence of Chlorobium phaeobacteroides DSM 266.</title>
        <authorList>
            <consortium name="US DOE Joint Genome Institute"/>
            <person name="Copeland A."/>
            <person name="Lucas S."/>
            <person name="Lapidus A."/>
            <person name="Barry K."/>
            <person name="Detter J.C."/>
            <person name="Glavina del Rio T."/>
            <person name="Hammon N."/>
            <person name="Israni S."/>
            <person name="Pitluck S."/>
            <person name="Goltsman E."/>
            <person name="Schmutz J."/>
            <person name="Larimer F."/>
            <person name="Land M."/>
            <person name="Hauser L."/>
            <person name="Mikhailova N."/>
            <person name="Li T."/>
            <person name="Overmann J."/>
            <person name="Bryant D.A."/>
            <person name="Richardson P."/>
        </authorList>
    </citation>
    <scope>NUCLEOTIDE SEQUENCE [LARGE SCALE GENOMIC DNA]</scope>
    <source>
        <strain>DSM 266 / SMG 266 / 2430</strain>
    </source>
</reference>
<name>UVRC_CHLPD</name>
<dbReference type="EMBL" id="CP000492">
    <property type="protein sequence ID" value="ABL64765.1"/>
    <property type="molecule type" value="Genomic_DNA"/>
</dbReference>
<dbReference type="RefSeq" id="WP_011744595.1">
    <property type="nucleotide sequence ID" value="NC_008639.1"/>
</dbReference>
<dbReference type="SMR" id="A1BED8"/>
<dbReference type="STRING" id="290317.Cpha266_0710"/>
<dbReference type="KEGG" id="cph:Cpha266_0710"/>
<dbReference type="eggNOG" id="COG0322">
    <property type="taxonomic scope" value="Bacteria"/>
</dbReference>
<dbReference type="HOGENOM" id="CLU_014841_3_2_10"/>
<dbReference type="OrthoDB" id="9804933at2"/>
<dbReference type="Proteomes" id="UP000008701">
    <property type="component" value="Chromosome"/>
</dbReference>
<dbReference type="GO" id="GO:0005737">
    <property type="term" value="C:cytoplasm"/>
    <property type="evidence" value="ECO:0007669"/>
    <property type="project" value="UniProtKB-SubCell"/>
</dbReference>
<dbReference type="GO" id="GO:0009380">
    <property type="term" value="C:excinuclease repair complex"/>
    <property type="evidence" value="ECO:0007669"/>
    <property type="project" value="InterPro"/>
</dbReference>
<dbReference type="GO" id="GO:0003677">
    <property type="term" value="F:DNA binding"/>
    <property type="evidence" value="ECO:0007669"/>
    <property type="project" value="UniProtKB-UniRule"/>
</dbReference>
<dbReference type="GO" id="GO:0009381">
    <property type="term" value="F:excinuclease ABC activity"/>
    <property type="evidence" value="ECO:0007669"/>
    <property type="project" value="UniProtKB-UniRule"/>
</dbReference>
<dbReference type="GO" id="GO:0006289">
    <property type="term" value="P:nucleotide-excision repair"/>
    <property type="evidence" value="ECO:0007669"/>
    <property type="project" value="UniProtKB-UniRule"/>
</dbReference>
<dbReference type="GO" id="GO:0009432">
    <property type="term" value="P:SOS response"/>
    <property type="evidence" value="ECO:0007669"/>
    <property type="project" value="UniProtKB-UniRule"/>
</dbReference>
<dbReference type="CDD" id="cd10434">
    <property type="entry name" value="GIY-YIG_UvrC_Cho"/>
    <property type="match status" value="1"/>
</dbReference>
<dbReference type="FunFam" id="3.30.420.340:FF:000001">
    <property type="entry name" value="UvrABC system protein C"/>
    <property type="match status" value="1"/>
</dbReference>
<dbReference type="FunFam" id="3.40.1440.10:FF:000001">
    <property type="entry name" value="UvrABC system protein C"/>
    <property type="match status" value="1"/>
</dbReference>
<dbReference type="Gene3D" id="1.10.150.20">
    <property type="entry name" value="5' to 3' exonuclease, C-terminal subdomain"/>
    <property type="match status" value="1"/>
</dbReference>
<dbReference type="Gene3D" id="3.40.1440.10">
    <property type="entry name" value="GIY-YIG endonuclease"/>
    <property type="match status" value="1"/>
</dbReference>
<dbReference type="Gene3D" id="4.10.860.10">
    <property type="entry name" value="UVR domain"/>
    <property type="match status" value="1"/>
</dbReference>
<dbReference type="Gene3D" id="3.30.420.340">
    <property type="entry name" value="UvrC, RNAse H endonuclease domain"/>
    <property type="match status" value="1"/>
</dbReference>
<dbReference type="HAMAP" id="MF_00203">
    <property type="entry name" value="UvrC"/>
    <property type="match status" value="1"/>
</dbReference>
<dbReference type="InterPro" id="IPR000305">
    <property type="entry name" value="GIY-YIG_endonuc"/>
</dbReference>
<dbReference type="InterPro" id="IPR035901">
    <property type="entry name" value="GIY-YIG_endonuc_sf"/>
</dbReference>
<dbReference type="InterPro" id="IPR047296">
    <property type="entry name" value="GIY-YIG_UvrC_Cho"/>
</dbReference>
<dbReference type="InterPro" id="IPR003583">
    <property type="entry name" value="Hlx-hairpin-Hlx_DNA-bd_motif"/>
</dbReference>
<dbReference type="InterPro" id="IPR010994">
    <property type="entry name" value="RuvA_2-like"/>
</dbReference>
<dbReference type="InterPro" id="IPR001943">
    <property type="entry name" value="UVR_dom"/>
</dbReference>
<dbReference type="InterPro" id="IPR036876">
    <property type="entry name" value="UVR_dom_sf"/>
</dbReference>
<dbReference type="InterPro" id="IPR050066">
    <property type="entry name" value="UvrABC_protein_C"/>
</dbReference>
<dbReference type="InterPro" id="IPR004791">
    <property type="entry name" value="UvrC"/>
</dbReference>
<dbReference type="InterPro" id="IPR001162">
    <property type="entry name" value="UvrC_RNase_H_dom"/>
</dbReference>
<dbReference type="InterPro" id="IPR038476">
    <property type="entry name" value="UvrC_RNase_H_dom_sf"/>
</dbReference>
<dbReference type="NCBIfam" id="NF001824">
    <property type="entry name" value="PRK00558.1-5"/>
    <property type="match status" value="1"/>
</dbReference>
<dbReference type="NCBIfam" id="TIGR00194">
    <property type="entry name" value="uvrC"/>
    <property type="match status" value="1"/>
</dbReference>
<dbReference type="PANTHER" id="PTHR30562:SF1">
    <property type="entry name" value="UVRABC SYSTEM PROTEIN C"/>
    <property type="match status" value="1"/>
</dbReference>
<dbReference type="PANTHER" id="PTHR30562">
    <property type="entry name" value="UVRC/OXIDOREDUCTASE"/>
    <property type="match status" value="1"/>
</dbReference>
<dbReference type="Pfam" id="PF01541">
    <property type="entry name" value="GIY-YIG"/>
    <property type="match status" value="1"/>
</dbReference>
<dbReference type="Pfam" id="PF14520">
    <property type="entry name" value="HHH_5"/>
    <property type="match status" value="1"/>
</dbReference>
<dbReference type="Pfam" id="PF02151">
    <property type="entry name" value="UVR"/>
    <property type="match status" value="1"/>
</dbReference>
<dbReference type="Pfam" id="PF22920">
    <property type="entry name" value="UvrC_RNaseH"/>
    <property type="match status" value="1"/>
</dbReference>
<dbReference type="Pfam" id="PF08459">
    <property type="entry name" value="UvrC_RNaseH_dom"/>
    <property type="match status" value="1"/>
</dbReference>
<dbReference type="SMART" id="SM00465">
    <property type="entry name" value="GIYc"/>
    <property type="match status" value="1"/>
</dbReference>
<dbReference type="SMART" id="SM00278">
    <property type="entry name" value="HhH1"/>
    <property type="match status" value="1"/>
</dbReference>
<dbReference type="SUPFAM" id="SSF46600">
    <property type="entry name" value="C-terminal UvrC-binding domain of UvrB"/>
    <property type="match status" value="1"/>
</dbReference>
<dbReference type="SUPFAM" id="SSF82771">
    <property type="entry name" value="GIY-YIG endonuclease"/>
    <property type="match status" value="1"/>
</dbReference>
<dbReference type="SUPFAM" id="SSF47781">
    <property type="entry name" value="RuvA domain 2-like"/>
    <property type="match status" value="1"/>
</dbReference>
<dbReference type="PROSITE" id="PS50164">
    <property type="entry name" value="GIY_YIG"/>
    <property type="match status" value="1"/>
</dbReference>
<dbReference type="PROSITE" id="PS50151">
    <property type="entry name" value="UVR"/>
    <property type="match status" value="1"/>
</dbReference>
<dbReference type="PROSITE" id="PS50165">
    <property type="entry name" value="UVRC"/>
    <property type="match status" value="1"/>
</dbReference>
<organism>
    <name type="scientific">Chlorobium phaeobacteroides (strain DSM 266 / SMG 266 / 2430)</name>
    <dbReference type="NCBI Taxonomy" id="290317"/>
    <lineage>
        <taxon>Bacteria</taxon>
        <taxon>Pseudomonadati</taxon>
        <taxon>Chlorobiota</taxon>
        <taxon>Chlorobiia</taxon>
        <taxon>Chlorobiales</taxon>
        <taxon>Chlorobiaceae</taxon>
        <taxon>Chlorobium/Pelodictyon group</taxon>
        <taxon>Chlorobium</taxon>
    </lineage>
</organism>
<evidence type="ECO:0000255" key="1">
    <source>
        <dbReference type="HAMAP-Rule" id="MF_00203"/>
    </source>
</evidence>
<proteinExistence type="inferred from homology"/>
<keyword id="KW-0963">Cytoplasm</keyword>
<keyword id="KW-0227">DNA damage</keyword>
<keyword id="KW-0228">DNA excision</keyword>
<keyword id="KW-0234">DNA repair</keyword>
<keyword id="KW-0267">Excision nuclease</keyword>
<keyword id="KW-1185">Reference proteome</keyword>
<keyword id="KW-0742">SOS response</keyword>
<accession>A1BED8</accession>
<gene>
    <name evidence="1" type="primary">uvrC</name>
    <name type="ordered locus">Cpha266_0710</name>
</gene>
<sequence>MDSNPLHHSNPPVGSLPLDKVASLPSSPGVYQFKNAQGRVIYIGKAKNLRNRVRSYFRNPQQLFGKTLVMVGKIADIEVIITSSEVEALILENNLIKELKPRYNVNLKDDKTYPYLVITNEPFPRILVTRQVKKDGSTWFGPYTEARQLRSILDFIGSIFPIRSCKLRLSPENISRGKFKVCLDYHIHKCKGPCEGLLTEEEYLLMIVEITRLLKGKTSATIRSLNERMLSFAKELKFEQAAELKTQIDSLKRYAERQKVVTSDTLDRDVFAVASRNDDGCGVVFKIREGKLLGSERLYMNNTEGVSVQDLLARVVERYYLETCNLLPDEIFLQTELPAEEKETLENLLISKISAEGKQKRTIRLTVPIIGEKAHLIQLCRENARHHLEEYLIQKQKRGEALREHSGLIALAELLHLPKTPNRIECFDNSHFHGTDYVSSMVAFVHGKAKKSDYRKFKLKTVQGSDDYAAMHEVLTRRYSGTLSVELPLPDLIVVDGGKGQLSTAVKVLVSLKLDIPVIGLAKRIEEIFTPHTSDPFNLPKTSPALKLIQQLRDEAHRFAVTYHRKLRTERTLETELTTIQGIGEKTAQKLLRHFGSVDLIRTAGVDELRAAAGNKTAALLYRFYHPLEEG</sequence>
<comment type="function">
    <text evidence="1">The UvrABC repair system catalyzes the recognition and processing of DNA lesions. UvrC both incises the 5' and 3' sides of the lesion. The N-terminal half is responsible for the 3' incision and the C-terminal half is responsible for the 5' incision.</text>
</comment>
<comment type="subunit">
    <text evidence="1">Interacts with UvrB in an incision complex.</text>
</comment>
<comment type="subcellular location">
    <subcellularLocation>
        <location evidence="1">Cytoplasm</location>
    </subcellularLocation>
</comment>
<comment type="similarity">
    <text evidence="1">Belongs to the UvrC family.</text>
</comment>